<organism>
    <name type="scientific">Arabidopsis thaliana</name>
    <name type="common">Mouse-ear cress</name>
    <dbReference type="NCBI Taxonomy" id="3702"/>
    <lineage>
        <taxon>Eukaryota</taxon>
        <taxon>Viridiplantae</taxon>
        <taxon>Streptophyta</taxon>
        <taxon>Embryophyta</taxon>
        <taxon>Tracheophyta</taxon>
        <taxon>Spermatophyta</taxon>
        <taxon>Magnoliopsida</taxon>
        <taxon>eudicotyledons</taxon>
        <taxon>Gunneridae</taxon>
        <taxon>Pentapetalae</taxon>
        <taxon>rosids</taxon>
        <taxon>malvids</taxon>
        <taxon>Brassicales</taxon>
        <taxon>Brassicaceae</taxon>
        <taxon>Camelineae</taxon>
        <taxon>Arabidopsis</taxon>
    </lineage>
</organism>
<evidence type="ECO:0000250" key="1">
    <source>
        <dbReference type="UniProtKB" id="Q8L7N4"/>
    </source>
</evidence>
<evidence type="ECO:0000255" key="2"/>
<evidence type="ECO:0000255" key="3">
    <source>
        <dbReference type="PROSITE-ProRule" id="PRU00175"/>
    </source>
</evidence>
<evidence type="ECO:0000269" key="4">
    <source>
    </source>
</evidence>
<evidence type="ECO:0000269" key="5">
    <source>
    </source>
</evidence>
<evidence type="ECO:0000303" key="6">
    <source>
    </source>
</evidence>
<evidence type="ECO:0000303" key="7">
    <source>
    </source>
</evidence>
<evidence type="ECO:0000303" key="8">
    <source>
    </source>
</evidence>
<evidence type="ECO:0000305" key="9"/>
<evidence type="ECO:0000312" key="10">
    <source>
        <dbReference type="Araport" id="AT1G59560"/>
    </source>
</evidence>
<evidence type="ECO:0000312" key="11">
    <source>
        <dbReference type="EMBL" id="AAF79749.1"/>
    </source>
</evidence>
<evidence type="ECO:0000312" key="12">
    <source>
        <dbReference type="EMBL" id="AAK62796.1"/>
    </source>
</evidence>
<feature type="chain" id="PRO_0000436709" description="E3 ubiquitin-protein ligase SPL1">
    <location>
        <begin position="1"/>
        <end position="338"/>
    </location>
</feature>
<feature type="transmembrane region" description="Helical" evidence="2">
    <location>
        <begin position="1"/>
        <end position="21"/>
    </location>
</feature>
<feature type="topological domain" description="Chloroplast intermembrane" evidence="9">
    <location>
        <begin position="22"/>
        <end position="223"/>
    </location>
</feature>
<feature type="transmembrane region" description="Helical" evidence="2">
    <location>
        <begin position="224"/>
        <end position="246"/>
    </location>
</feature>
<feature type="topological domain" description="Cytoplasmic" evidence="9">
    <location>
        <begin position="247"/>
        <end position="338"/>
    </location>
</feature>
<feature type="zinc finger region" description="RING-type" evidence="3">
    <location>
        <begin position="291"/>
        <end position="326"/>
    </location>
</feature>
<keyword id="KW-0150">Chloroplast</keyword>
<keyword id="KW-0472">Membrane</keyword>
<keyword id="KW-0479">Metal-binding</keyword>
<keyword id="KW-0934">Plastid</keyword>
<keyword id="KW-1002">Plastid outer membrane</keyword>
<keyword id="KW-1185">Reference proteome</keyword>
<keyword id="KW-0808">Transferase</keyword>
<keyword id="KW-0812">Transmembrane</keyword>
<keyword id="KW-1133">Transmembrane helix</keyword>
<keyword id="KW-0833">Ubl conjugation pathway</keyword>
<keyword id="KW-0862">Zinc</keyword>
<keyword id="KW-0863">Zinc-finger</keyword>
<sequence>MIHLAGFTCCLGGVALYLLTRSTGRDIKSITRVYQLKDLEQLVEVESKVVPLIIAVSGDVGSETPIKCEHSYVLGVFLKRTAEQQVLRRNWRFSWVRNSTLMQPMTKEVPWYLDDGTGRVNVDVSQGELGLALTVGSDVFEKAEPVSLVQGALGYLKGFKILGVRHVERVVPIGTPLTVVGEAVRDGMGNVRIQKPEQGPFYVTYIPLDQLISKLGDLSRRFKYASMGLTVLGVILISKPVIEYILKRIEDTLERRRRQFALKRVVDAAARRAKPVTGGGTSRDGDTPDLCVVCLDQKYNTAFVECGHMCCCTPCSLQLRTCPLCRERIQQVLKIYRH</sequence>
<comment type="function">
    <text evidence="1">Possesses E3 ubiquitin-protein ligase activity.</text>
</comment>
<comment type="catalytic activity">
    <reaction evidence="9">
        <text>S-ubiquitinyl-[E2 ubiquitin-conjugating enzyme]-L-cysteine + [acceptor protein]-L-lysine = [E2 ubiquitin-conjugating enzyme]-L-cysteine + N(6)-ubiquitinyl-[acceptor protein]-L-lysine.</text>
        <dbReference type="EC" id="2.3.2.27"/>
    </reaction>
</comment>
<comment type="pathway">
    <text>Protein modification; protein ubiquitination.</text>
</comment>
<comment type="subcellular location">
    <subcellularLocation>
        <location evidence="5">Plastid</location>
        <location evidence="5">Chloroplast outer membrane</location>
        <topology evidence="2">Multi-pass membrane protein</topology>
    </subcellularLocation>
</comment>
<comment type="induction">
    <text evidence="4">By infection with the bacterial pathogen Pseudomonas syringae pv. tomato, and treatment with fumonisin B1, a mycotoxin inducing apoptosis-like programmed cell death (PCD).</text>
</comment>
<comment type="disruption phenotype">
    <text evidence="4">No visible phenotype under normal growth conditions, but mutant plants show increased disease symptoms and cell death after inoculation with an avirulent strain of Pseudomonas syringae pv. tomato DC3000.</text>
</comment>
<comment type="sequence caution" evidence="9">
    <conflict type="erroneous gene model prediction">
        <sequence resource="EMBL-CDS" id="AAF79749"/>
    </conflict>
</comment>
<comment type="sequence caution" evidence="9">
    <conflict type="erroneous initiation">
        <sequence resource="EMBL-CDS" id="BAA87953"/>
    </conflict>
    <text>Truncated N-terminus.</text>
</comment>
<dbReference type="EC" id="2.3.2.27" evidence="9"/>
<dbReference type="EMBL" id="AC009317">
    <property type="protein sequence ID" value="AAF79749.1"/>
    <property type="status" value="ALT_SEQ"/>
    <property type="molecule type" value="Genomic_DNA"/>
</dbReference>
<dbReference type="EMBL" id="AC027036">
    <property type="protein sequence ID" value="AAK62796.1"/>
    <property type="molecule type" value="Genomic_DNA"/>
</dbReference>
<dbReference type="EMBL" id="CP002684">
    <property type="protein sequence ID" value="AEE33589.1"/>
    <property type="molecule type" value="Genomic_DNA"/>
</dbReference>
<dbReference type="EMBL" id="BT006461">
    <property type="protein sequence ID" value="AAP21269.1"/>
    <property type="molecule type" value="mRNA"/>
</dbReference>
<dbReference type="EMBL" id="AK228076">
    <property type="protein sequence ID" value="BAF00035.1"/>
    <property type="molecule type" value="mRNA"/>
</dbReference>
<dbReference type="EMBL" id="AB028228">
    <property type="protein sequence ID" value="BAA87953.1"/>
    <property type="status" value="ALT_INIT"/>
    <property type="molecule type" value="mRNA"/>
</dbReference>
<dbReference type="PIR" id="T52432">
    <property type="entry name" value="T52432"/>
</dbReference>
<dbReference type="RefSeq" id="NP_564745.1">
    <property type="nucleotide sequence ID" value="NM_104650.4"/>
</dbReference>
<dbReference type="SMR" id="Q94HV7"/>
<dbReference type="FunCoup" id="Q94HV7">
    <property type="interactions" value="2177"/>
</dbReference>
<dbReference type="IntAct" id="Q94HV7">
    <property type="interactions" value="21"/>
</dbReference>
<dbReference type="STRING" id="3702.Q94HV7"/>
<dbReference type="iPTMnet" id="Q94HV7"/>
<dbReference type="PaxDb" id="3702-AT1G59560.1"/>
<dbReference type="ProteomicsDB" id="228367"/>
<dbReference type="EnsemblPlants" id="AT1G59560.1">
    <property type="protein sequence ID" value="AT1G59560.1"/>
    <property type="gene ID" value="AT1G59560"/>
</dbReference>
<dbReference type="GeneID" id="842247"/>
<dbReference type="Gramene" id="AT1G59560.1">
    <property type="protein sequence ID" value="AT1G59560.1"/>
    <property type="gene ID" value="AT1G59560"/>
</dbReference>
<dbReference type="KEGG" id="ath:AT1G59560"/>
<dbReference type="Araport" id="AT1G59560"/>
<dbReference type="TAIR" id="AT1G59560">
    <property type="gene designation" value="ZCF61"/>
</dbReference>
<dbReference type="eggNOG" id="KOG1571">
    <property type="taxonomic scope" value="Eukaryota"/>
</dbReference>
<dbReference type="HOGENOM" id="CLU_050604_2_0_1"/>
<dbReference type="InParanoid" id="Q94HV7"/>
<dbReference type="OMA" id="RFWRILT"/>
<dbReference type="PhylomeDB" id="Q94HV7"/>
<dbReference type="UniPathway" id="UPA00143"/>
<dbReference type="PRO" id="PR:Q94HV7"/>
<dbReference type="Proteomes" id="UP000006548">
    <property type="component" value="Chromosome 1"/>
</dbReference>
<dbReference type="ExpressionAtlas" id="Q94HV7">
    <property type="expression patterns" value="baseline and differential"/>
</dbReference>
<dbReference type="GO" id="GO:0009507">
    <property type="term" value="C:chloroplast"/>
    <property type="evidence" value="ECO:0000314"/>
    <property type="project" value="TAIR"/>
</dbReference>
<dbReference type="GO" id="GO:0009941">
    <property type="term" value="C:chloroplast envelope"/>
    <property type="evidence" value="ECO:0000314"/>
    <property type="project" value="TAIR"/>
</dbReference>
<dbReference type="GO" id="GO:0009707">
    <property type="term" value="C:chloroplast outer membrane"/>
    <property type="evidence" value="ECO:0007669"/>
    <property type="project" value="UniProtKB-SubCell"/>
</dbReference>
<dbReference type="GO" id="GO:0004842">
    <property type="term" value="F:ubiquitin-protein transferase activity"/>
    <property type="evidence" value="ECO:0007669"/>
    <property type="project" value="InterPro"/>
</dbReference>
<dbReference type="GO" id="GO:0008270">
    <property type="term" value="F:zinc ion binding"/>
    <property type="evidence" value="ECO:0007669"/>
    <property type="project" value="UniProtKB-KW"/>
</dbReference>
<dbReference type="GO" id="GO:0016567">
    <property type="term" value="P:protein ubiquitination"/>
    <property type="evidence" value="ECO:0007669"/>
    <property type="project" value="UniProtKB-UniPathway"/>
</dbReference>
<dbReference type="FunFam" id="3.30.40.10:FF:000909">
    <property type="entry name" value="E3 ubiquitin-protein ligase SP1"/>
    <property type="match status" value="1"/>
</dbReference>
<dbReference type="Gene3D" id="3.30.40.10">
    <property type="entry name" value="Zinc/RING finger domain, C3HC4 (zinc finger)"/>
    <property type="match status" value="1"/>
</dbReference>
<dbReference type="InterPro" id="IPR022170">
    <property type="entry name" value="MUL1-like"/>
</dbReference>
<dbReference type="InterPro" id="IPR044231">
    <property type="entry name" value="SP1/SPL1"/>
</dbReference>
<dbReference type="InterPro" id="IPR001841">
    <property type="entry name" value="Znf_RING"/>
</dbReference>
<dbReference type="InterPro" id="IPR013083">
    <property type="entry name" value="Znf_RING/FYVE/PHD"/>
</dbReference>
<dbReference type="PANTHER" id="PTHR47568">
    <property type="match status" value="1"/>
</dbReference>
<dbReference type="PANTHER" id="PTHR47568:SF2">
    <property type="entry name" value="E3 UBIQUITIN-PROTEIN LIGASE SP1-RELATED"/>
    <property type="match status" value="1"/>
</dbReference>
<dbReference type="Pfam" id="PF12483">
    <property type="entry name" value="GIDE"/>
    <property type="match status" value="1"/>
</dbReference>
<dbReference type="Pfam" id="PF13920">
    <property type="entry name" value="zf-C3HC4_3"/>
    <property type="match status" value="1"/>
</dbReference>
<dbReference type="SUPFAM" id="SSF57850">
    <property type="entry name" value="RING/U-box"/>
    <property type="match status" value="1"/>
</dbReference>
<dbReference type="PROSITE" id="PS50089">
    <property type="entry name" value="ZF_RING_2"/>
    <property type="match status" value="1"/>
</dbReference>
<gene>
    <name evidence="8" type="primary">SPL1</name>
    <name evidence="7" type="synonym">DIAL2</name>
    <name evidence="6" type="synonym">ZCF61</name>
    <name evidence="10" type="ordered locus">At1g59560</name>
    <name evidence="11" type="ORF">T30E16.12</name>
    <name evidence="12" type="ORF">T4M14.12</name>
</gene>
<accession>Q94HV7</accession>
<accession>Q9LQ59</accession>
<accession>Q9SLU0</accession>
<protein>
    <recommendedName>
        <fullName evidence="9">E3 ubiquitin-protein ligase SPL1</fullName>
        <ecNumber evidence="9">2.3.2.27</ecNumber>
    </recommendedName>
    <alternativeName>
        <fullName evidence="7">DIAP1-like protein 2</fullName>
    </alternativeName>
    <alternativeName>
        <fullName evidence="9">RING-type E3 ubiquitin transferase SPL1</fullName>
    </alternativeName>
    <alternativeName>
        <fullName evidence="8">SP1-like protein 1</fullName>
    </alternativeName>
</protein>
<name>SPL1P_ARATH</name>
<proteinExistence type="evidence at transcript level"/>
<reference key="1">
    <citation type="journal article" date="2000" name="Nature">
        <title>Sequence and analysis of chromosome 1 of the plant Arabidopsis thaliana.</title>
        <authorList>
            <person name="Theologis A."/>
            <person name="Ecker J.R."/>
            <person name="Palm C.J."/>
            <person name="Federspiel N.A."/>
            <person name="Kaul S."/>
            <person name="White O."/>
            <person name="Alonso J."/>
            <person name="Altafi H."/>
            <person name="Araujo R."/>
            <person name="Bowman C.L."/>
            <person name="Brooks S.Y."/>
            <person name="Buehler E."/>
            <person name="Chan A."/>
            <person name="Chao Q."/>
            <person name="Chen H."/>
            <person name="Cheuk R.F."/>
            <person name="Chin C.W."/>
            <person name="Chung M.K."/>
            <person name="Conn L."/>
            <person name="Conway A.B."/>
            <person name="Conway A.R."/>
            <person name="Creasy T.H."/>
            <person name="Dewar K."/>
            <person name="Dunn P."/>
            <person name="Etgu P."/>
            <person name="Feldblyum T.V."/>
            <person name="Feng J.-D."/>
            <person name="Fong B."/>
            <person name="Fujii C.Y."/>
            <person name="Gill J.E."/>
            <person name="Goldsmith A.D."/>
            <person name="Haas B."/>
            <person name="Hansen N.F."/>
            <person name="Hughes B."/>
            <person name="Huizar L."/>
            <person name="Hunter J.L."/>
            <person name="Jenkins J."/>
            <person name="Johnson-Hopson C."/>
            <person name="Khan S."/>
            <person name="Khaykin E."/>
            <person name="Kim C.J."/>
            <person name="Koo H.L."/>
            <person name="Kremenetskaia I."/>
            <person name="Kurtz D.B."/>
            <person name="Kwan A."/>
            <person name="Lam B."/>
            <person name="Langin-Hooper S."/>
            <person name="Lee A."/>
            <person name="Lee J.M."/>
            <person name="Lenz C.A."/>
            <person name="Li J.H."/>
            <person name="Li Y.-P."/>
            <person name="Lin X."/>
            <person name="Liu S.X."/>
            <person name="Liu Z.A."/>
            <person name="Luros J.S."/>
            <person name="Maiti R."/>
            <person name="Marziali A."/>
            <person name="Militscher J."/>
            <person name="Miranda M."/>
            <person name="Nguyen M."/>
            <person name="Nierman W.C."/>
            <person name="Osborne B.I."/>
            <person name="Pai G."/>
            <person name="Peterson J."/>
            <person name="Pham P.K."/>
            <person name="Rizzo M."/>
            <person name="Rooney T."/>
            <person name="Rowley D."/>
            <person name="Sakano H."/>
            <person name="Salzberg S.L."/>
            <person name="Schwartz J.R."/>
            <person name="Shinn P."/>
            <person name="Southwick A.M."/>
            <person name="Sun H."/>
            <person name="Tallon L.J."/>
            <person name="Tambunga G."/>
            <person name="Toriumi M.J."/>
            <person name="Town C.D."/>
            <person name="Utterback T."/>
            <person name="Van Aken S."/>
            <person name="Vaysberg M."/>
            <person name="Vysotskaia V.S."/>
            <person name="Walker M."/>
            <person name="Wu D."/>
            <person name="Yu G."/>
            <person name="Fraser C.M."/>
            <person name="Venter J.C."/>
            <person name="Davis R.W."/>
        </authorList>
    </citation>
    <scope>NUCLEOTIDE SEQUENCE [LARGE SCALE GENOMIC DNA]</scope>
    <source>
        <strain>cv. Columbia</strain>
    </source>
</reference>
<reference key="2">
    <citation type="journal article" date="2017" name="Plant J.">
        <title>Araport11: a complete reannotation of the Arabidopsis thaliana reference genome.</title>
        <authorList>
            <person name="Cheng C.Y."/>
            <person name="Krishnakumar V."/>
            <person name="Chan A.P."/>
            <person name="Thibaud-Nissen F."/>
            <person name="Schobel S."/>
            <person name="Town C.D."/>
        </authorList>
    </citation>
    <scope>GENOME REANNOTATION</scope>
    <source>
        <strain>cv. Columbia</strain>
    </source>
</reference>
<reference key="3">
    <citation type="journal article" date="2003" name="Science">
        <title>Empirical analysis of transcriptional activity in the Arabidopsis genome.</title>
        <authorList>
            <person name="Yamada K."/>
            <person name="Lim J."/>
            <person name="Dale J.M."/>
            <person name="Chen H."/>
            <person name="Shinn P."/>
            <person name="Palm C.J."/>
            <person name="Southwick A.M."/>
            <person name="Wu H.C."/>
            <person name="Kim C.J."/>
            <person name="Nguyen M."/>
            <person name="Pham P.K."/>
            <person name="Cheuk R.F."/>
            <person name="Karlin-Newmann G."/>
            <person name="Liu S.X."/>
            <person name="Lam B."/>
            <person name="Sakano H."/>
            <person name="Wu T."/>
            <person name="Yu G."/>
            <person name="Miranda M."/>
            <person name="Quach H.L."/>
            <person name="Tripp M."/>
            <person name="Chang C.H."/>
            <person name="Lee J.M."/>
            <person name="Toriumi M.J."/>
            <person name="Chan M.M."/>
            <person name="Tang C.C."/>
            <person name="Onodera C.S."/>
            <person name="Deng J.M."/>
            <person name="Akiyama K."/>
            <person name="Ansari Y."/>
            <person name="Arakawa T."/>
            <person name="Banh J."/>
            <person name="Banno F."/>
            <person name="Bowser L."/>
            <person name="Brooks S.Y."/>
            <person name="Carninci P."/>
            <person name="Chao Q."/>
            <person name="Choy N."/>
            <person name="Enju A."/>
            <person name="Goldsmith A.D."/>
            <person name="Gurjal M."/>
            <person name="Hansen N.F."/>
            <person name="Hayashizaki Y."/>
            <person name="Johnson-Hopson C."/>
            <person name="Hsuan V.W."/>
            <person name="Iida K."/>
            <person name="Karnes M."/>
            <person name="Khan S."/>
            <person name="Koesema E."/>
            <person name="Ishida J."/>
            <person name="Jiang P.X."/>
            <person name="Jones T."/>
            <person name="Kawai J."/>
            <person name="Kamiya A."/>
            <person name="Meyers C."/>
            <person name="Nakajima M."/>
            <person name="Narusaka M."/>
            <person name="Seki M."/>
            <person name="Sakurai T."/>
            <person name="Satou M."/>
            <person name="Tamse R."/>
            <person name="Vaysberg M."/>
            <person name="Wallender E.K."/>
            <person name="Wong C."/>
            <person name="Yamamura Y."/>
            <person name="Yuan S."/>
            <person name="Shinozaki K."/>
            <person name="Davis R.W."/>
            <person name="Theologis A."/>
            <person name="Ecker J.R."/>
        </authorList>
    </citation>
    <scope>NUCLEOTIDE SEQUENCE [LARGE SCALE MRNA]</scope>
    <source>
        <strain>cv. Columbia</strain>
    </source>
</reference>
<reference key="4">
    <citation type="submission" date="2006-07" db="EMBL/GenBank/DDBJ databases">
        <title>Large-scale analysis of RIKEN Arabidopsis full-length (RAFL) cDNAs.</title>
        <authorList>
            <person name="Totoki Y."/>
            <person name="Seki M."/>
            <person name="Ishida J."/>
            <person name="Nakajima M."/>
            <person name="Enju A."/>
            <person name="Kamiya A."/>
            <person name="Narusaka M."/>
            <person name="Shin-i T."/>
            <person name="Nakagawa M."/>
            <person name="Sakamoto N."/>
            <person name="Oishi K."/>
            <person name="Kohara Y."/>
            <person name="Kobayashi M."/>
            <person name="Toyoda A."/>
            <person name="Sakaki Y."/>
            <person name="Sakurai T."/>
            <person name="Iida K."/>
            <person name="Akiyama K."/>
            <person name="Satou M."/>
            <person name="Toyoda T."/>
            <person name="Konagaya A."/>
            <person name="Carninci P."/>
            <person name="Kawai J."/>
            <person name="Hayashizaki Y."/>
            <person name="Shinozaki K."/>
        </authorList>
    </citation>
    <scope>NUCLEOTIDE SEQUENCE [LARGE SCALE MRNA]</scope>
    <source>
        <strain>cv. Columbia</strain>
    </source>
</reference>
<reference key="5">
    <citation type="journal article" date="1999" name="Gene">
        <title>Isolation and analysis of cDNA within a 300 kb Arabidopsis thaliana genomic region located around the 100 map unit of chromosome 1.</title>
        <authorList>
            <person name="Kato A."/>
            <person name="Suzuki M."/>
            <person name="Kuwahara A."/>
            <person name="Ooe H."/>
            <person name="Higano-Inaba K."/>
            <person name="Komeda Y."/>
        </authorList>
    </citation>
    <scope>NUCLEOTIDE SEQUENCE [MRNA] OF 96-338</scope>
    <source>
        <strain>cv. Columbia</strain>
    </source>
</reference>
<reference key="6">
    <citation type="journal article" date="2011" name="Plant Cell Rep.">
        <title>Arabidopsis DAL1 and DAL2, two RING finger proteins homologous to Drosophila DIAP1, are involved in regulation of programmed cell death.</title>
        <authorList>
            <person name="Basnayake B.M."/>
            <person name="Li D."/>
            <person name="Zhang H."/>
            <person name="Li G."/>
            <person name="Virk N."/>
            <person name="Song F."/>
        </authorList>
    </citation>
    <scope>FUNCTION</scope>
    <scope>INDUCTION</scope>
    <scope>DISRUPTION PHENOTYPE</scope>
</reference>
<reference key="7">
    <citation type="journal article" date="2012" name="Science">
        <title>Chloroplast biogenesis is regulated by direct action of the ubiquitin-proteasome system.</title>
        <authorList>
            <person name="Ling Q."/>
            <person name="Huang W."/>
            <person name="Baldwin A."/>
            <person name="Jarvis P."/>
        </authorList>
    </citation>
    <scope>SUBCELLULAR LOCATION</scope>
</reference>